<keyword id="KW-0238">DNA-binding</keyword>
<keyword id="KW-0489">Methyltransferase</keyword>
<keyword id="KW-0680">Restriction system</keyword>
<keyword id="KW-0949">S-adenosyl-L-methionine</keyword>
<keyword id="KW-0808">Transferase</keyword>
<proteinExistence type="inferred from homology"/>
<dbReference type="EC" id="2.1.1.72"/>
<dbReference type="EMBL" id="U01232">
    <property type="protein sequence ID" value="AAA81887.1"/>
    <property type="molecule type" value="Genomic_DNA"/>
</dbReference>
<dbReference type="SMR" id="Q53609"/>
<dbReference type="REBASE" id="3491">
    <property type="entry name" value="M.SalI"/>
</dbReference>
<dbReference type="PRO" id="PR:Q53609"/>
<dbReference type="GO" id="GO:0016746">
    <property type="term" value="F:acyltransferase activity"/>
    <property type="evidence" value="ECO:0007669"/>
    <property type="project" value="InterPro"/>
</dbReference>
<dbReference type="GO" id="GO:0003677">
    <property type="term" value="F:DNA binding"/>
    <property type="evidence" value="ECO:0007669"/>
    <property type="project" value="UniProtKB-KW"/>
</dbReference>
<dbReference type="GO" id="GO:0009007">
    <property type="term" value="F:site-specific DNA-methyltransferase (adenine-specific) activity"/>
    <property type="evidence" value="ECO:0007669"/>
    <property type="project" value="UniProtKB-EC"/>
</dbReference>
<dbReference type="GO" id="GO:0009307">
    <property type="term" value="P:DNA restriction-modification system"/>
    <property type="evidence" value="ECO:0007669"/>
    <property type="project" value="UniProtKB-KW"/>
</dbReference>
<dbReference type="GO" id="GO:0032259">
    <property type="term" value="P:methylation"/>
    <property type="evidence" value="ECO:0007669"/>
    <property type="project" value="UniProtKB-KW"/>
</dbReference>
<dbReference type="CDD" id="cd02440">
    <property type="entry name" value="AdoMet_MTases"/>
    <property type="match status" value="1"/>
</dbReference>
<dbReference type="Gene3D" id="4.10.320.10">
    <property type="entry name" value="E3-binding domain"/>
    <property type="match status" value="1"/>
</dbReference>
<dbReference type="Gene3D" id="3.40.50.150">
    <property type="entry name" value="Vaccinia Virus protein VP39"/>
    <property type="match status" value="1"/>
</dbReference>
<dbReference type="InterPro" id="IPR002052">
    <property type="entry name" value="DNA_methylase_N6_adenine_CS"/>
</dbReference>
<dbReference type="InterPro" id="IPR036625">
    <property type="entry name" value="E3-bd_dom_sf"/>
</dbReference>
<dbReference type="InterPro" id="IPR055370">
    <property type="entry name" value="Lsr2_DNA-bd"/>
</dbReference>
<dbReference type="InterPro" id="IPR011639">
    <property type="entry name" value="MethylTrfase_TaqI-like_dom"/>
</dbReference>
<dbReference type="InterPro" id="IPR050953">
    <property type="entry name" value="N4_N6_ade-DNA_methylase"/>
</dbReference>
<dbReference type="InterPro" id="IPR029063">
    <property type="entry name" value="SAM-dependent_MTases_sf"/>
</dbReference>
<dbReference type="PANTHER" id="PTHR33841:SF5">
    <property type="entry name" value="DNA METHYLASE (MODIFICATION METHYLASE) (METHYLTRANSFERASE)-RELATED"/>
    <property type="match status" value="1"/>
</dbReference>
<dbReference type="PANTHER" id="PTHR33841">
    <property type="entry name" value="DNA METHYLTRANSFERASE YEEA-RELATED"/>
    <property type="match status" value="1"/>
</dbReference>
<dbReference type="Pfam" id="PF07669">
    <property type="entry name" value="Eco57I"/>
    <property type="match status" value="1"/>
</dbReference>
<dbReference type="Pfam" id="PF23359">
    <property type="entry name" value="Lsr2_DNA-bd"/>
    <property type="match status" value="1"/>
</dbReference>
<dbReference type="PRINTS" id="PR00507">
    <property type="entry name" value="N12N6MTFRASE"/>
</dbReference>
<dbReference type="SUPFAM" id="SSF53335">
    <property type="entry name" value="S-adenosyl-L-methionine-dependent methyltransferases"/>
    <property type="match status" value="1"/>
</dbReference>
<dbReference type="PROSITE" id="PS00092">
    <property type="entry name" value="N6_MTASE"/>
    <property type="match status" value="1"/>
</dbReference>
<organism>
    <name type="scientific">Streptomyces albus G</name>
    <dbReference type="NCBI Taxonomy" id="1962"/>
    <lineage>
        <taxon>Bacteria</taxon>
        <taxon>Bacillati</taxon>
        <taxon>Actinomycetota</taxon>
        <taxon>Actinomycetes</taxon>
        <taxon>Kitasatosporales</taxon>
        <taxon>Streptomycetaceae</taxon>
        <taxon>Streptomyces</taxon>
    </lineage>
</organism>
<protein>
    <recommendedName>
        <fullName evidence="1">Type II methyltransferase M.SalI</fullName>
        <shortName evidence="2">M.SalI</shortName>
        <ecNumber>2.1.1.72</ecNumber>
    </recommendedName>
    <alternativeName>
        <fullName>Adenine-specific methyltransferase SalI</fullName>
    </alternativeName>
    <alternativeName>
        <fullName>Modification methylase SalI</fullName>
    </alternativeName>
</protein>
<evidence type="ECO:0000303" key="1">
    <source>
    </source>
</evidence>
<evidence type="ECO:0000303" key="2">
    <source>
    </source>
</evidence>
<evidence type="ECO:0000305" key="3"/>
<reference key="1">
    <citation type="journal article" date="1994" name="Gene">
        <title>Organization and sequence of the SalI restriction-modification system.</title>
        <authorList>
            <person name="Rodicio M.R."/>
            <person name="Quinton-Jager T."/>
            <person name="Moran L.S."/>
            <person name="Slatko B.E."/>
            <person name="Wilson G.G."/>
        </authorList>
    </citation>
    <scope>NUCLEOTIDE SEQUENCE [GENOMIC DNA]</scope>
</reference>
<reference key="2">
    <citation type="journal article" date="2003" name="Nucleic Acids Res.">
        <title>A nomenclature for restriction enzymes, DNA methyltransferases, homing endonucleases and their genes.</title>
        <authorList>
            <person name="Roberts R.J."/>
            <person name="Belfort M."/>
            <person name="Bestor T."/>
            <person name="Bhagwat A.S."/>
            <person name="Bickle T.A."/>
            <person name="Bitinaite J."/>
            <person name="Blumenthal R.M."/>
            <person name="Degtyarev S.K."/>
            <person name="Dryden D.T."/>
            <person name="Dybvig K."/>
            <person name="Firman K."/>
            <person name="Gromova E.S."/>
            <person name="Gumport R.I."/>
            <person name="Halford S.E."/>
            <person name="Hattman S."/>
            <person name="Heitman J."/>
            <person name="Hornby D.P."/>
            <person name="Janulaitis A."/>
            <person name="Jeltsch A."/>
            <person name="Josephsen J."/>
            <person name="Kiss A."/>
            <person name="Klaenhammer T.R."/>
            <person name="Kobayashi I."/>
            <person name="Kong H."/>
            <person name="Krueger D.H."/>
            <person name="Lacks S."/>
            <person name="Marinus M.G."/>
            <person name="Miyahara M."/>
            <person name="Morgan R.D."/>
            <person name="Murray N.E."/>
            <person name="Nagaraja V."/>
            <person name="Piekarowicz A."/>
            <person name="Pingoud A."/>
            <person name="Raleigh E."/>
            <person name="Rao D.N."/>
            <person name="Reich N."/>
            <person name="Repin V.E."/>
            <person name="Selker E.U."/>
            <person name="Shaw P.C."/>
            <person name="Stein D.C."/>
            <person name="Stoddard B.L."/>
            <person name="Szybalski W."/>
            <person name="Trautner T.A."/>
            <person name="Van Etten J.L."/>
            <person name="Vitor J.M."/>
            <person name="Wilson G.G."/>
            <person name="Xu S.Y."/>
        </authorList>
    </citation>
    <scope>NOMENCLATURE</scope>
    <scope>SUBTYPE</scope>
</reference>
<name>MTS1_STRAL</name>
<comment type="function">
    <text evidence="1">A gamma subtype methylase that recognizes the double-stranded sequence 5'-GTCGAC-3', methylates A-5 on both strands, and protects the DNA from cleavage by the SalI endonuclease.</text>
</comment>
<comment type="catalytic activity">
    <reaction>
        <text>a 2'-deoxyadenosine in DNA + S-adenosyl-L-methionine = an N(6)-methyl-2'-deoxyadenosine in DNA + S-adenosyl-L-homocysteine + H(+)</text>
        <dbReference type="Rhea" id="RHEA:15197"/>
        <dbReference type="Rhea" id="RHEA-COMP:12418"/>
        <dbReference type="Rhea" id="RHEA-COMP:12419"/>
        <dbReference type="ChEBI" id="CHEBI:15378"/>
        <dbReference type="ChEBI" id="CHEBI:57856"/>
        <dbReference type="ChEBI" id="CHEBI:59789"/>
        <dbReference type="ChEBI" id="CHEBI:90615"/>
        <dbReference type="ChEBI" id="CHEBI:90616"/>
        <dbReference type="EC" id="2.1.1.72"/>
    </reaction>
</comment>
<comment type="similarity">
    <text evidence="3">Belongs to the N(4)/N(6)-methyltransferase family.</text>
</comment>
<accession>Q53609</accession>
<sequence>MHSEAREAEARRLLLQETLDAERTFLERNQWGQFATPPSLAGEIMRYTIDLHEETRINFLEPSCGSGSFFSALLRNLGDKKIEHAVGVELDPRFSKAASDLWTGQGLRVIEGDFTSPSLVSGPVASLLVANPPYVRHHHLGIDQKRDLVARCADQLGIKPSGLSGLYLYFVLLSHRLLRADAVSTWLIPSEFMDVNYGTALKEYLATRVQLVRIHQYDAAEVQFDDALVTSSVVVFRNSPPRPGHTAEFSFGGTLSEPKVTHQIPSAALTPEAKWSRYVTGVMPADINLKQTGPKLSDFFKIRRGLATGSNAFFIIPRSEAERLGIKRNFLRPILPSPRKLKGDAITADASGWPDIPEQLALLDCPLPIEDLLLENPALAAYLSTADEKIRGGYLVSKRSPWYKQEQREPAPILLTYMGRGKDDQHPLRFIRNDSDAVATNMYLMLYPTALLQRYLAGDPERIKQVHKALLAITAADLRGGGRVYGGGLHKMEPKELAALPADGIATLDPVLREDISMVSVPPRKRTGRPQMPGPSASEVRAWARANGVCVPDRGRLRPEVWDAWRQAHAGEASPLNIDAGDQVALW</sequence>
<feature type="chain" id="PRO_0000087979" description="Type II methyltransferase M.SalI">
    <location>
        <begin position="1"/>
        <end position="587"/>
    </location>
</feature>
<gene>
    <name evidence="2" type="primary">salIM</name>
</gene>